<keyword id="KW-0479">Metal-binding</keyword>
<keyword id="KW-0539">Nucleus</keyword>
<keyword id="KW-0677">Repeat</keyword>
<keyword id="KW-0804">Transcription</keyword>
<keyword id="KW-0805">Transcription regulation</keyword>
<keyword id="KW-0862">Zinc</keyword>
<keyword id="KW-0863">Zinc-finger</keyword>
<sequence>MSTSQAEHTRVHPRRRPLKTAPPSLSASTSIESCVADSSSSSPNLSLRKGETFHSPSPPPSDDIDPVLSFRSLPQRSPTCTRSLEAIAAREQRMVDYLSNLNLNSLEPSSPLSDKDNGDDLPVPRAILQAHIDSQSMADRVGRPTQSSELHTPSKVRKTHCHASDSGLGTSLSSENMSASDKSKGIFFYLLNLQPHFLFANMLVIVKAGQLSFESQSSAKATTRMTQSAITSSISAFDAKISQKRQLGLPACKQIERLIIKPILREERLKPFHPLVQSIPQRIVDREIGCLRDLEKTLLWLAPVSDFQKRNGVGCIAHSFSRVLKNYAASRASYLRFCEFTIQCLHTSVYHLNERDQRLPADRPYTNGYFLDLVAQIRRYAAMINESRSSMPSNREPAQNGAKASAPKYVVSPPSRWFARFNIVRSEHITLEGGLSKNGRPAELVVHKDGEMISLRTGKPYEENAVPAMKRSLSLGSVDEGVERSMARRKKNAPPMDINQKCKDCDKVFKRPCDLTKHEKTHSRPWKCTEPSCKYHEIGWPTEKERDRHINDKHSKAPALYKCKFAPCTYSSKRESNCKQHMEKAHGWDYVRSKHNGRNSKKASNGATPQTPSIATPSSKAQGITTPLTGSEPSPFEPVTAYPPNPPFSFADPPTQTGSGDFPLFTTNSPFEDLAAGVNDFSPLPTTSLDFQAFQSQLEGADPNGLIPLTFDRQSFDSGSPVPDLINETMGFDTSPVASTDSSSLNFDLAWSQLDAQNVEEEFTTLTMQMLTPEHSVSMSALNSFSRDPSISNPSPLPVQKVENSLYTPDSCHVDEGVSDLFDSGYQHKADFMLFDQHTNFGASSVNMSSTCQLSALHNSNQMFPSLNTPDLNYMTQGWPQDMEMEHF</sequence>
<organism>
    <name type="scientific">Aspergillus fumigatus (strain CBS 144.89 / FGSC A1163 / CEA10)</name>
    <name type="common">Neosartorya fumigata</name>
    <dbReference type="NCBI Taxonomy" id="451804"/>
    <lineage>
        <taxon>Eukaryota</taxon>
        <taxon>Fungi</taxon>
        <taxon>Dikarya</taxon>
        <taxon>Ascomycota</taxon>
        <taxon>Pezizomycotina</taxon>
        <taxon>Eurotiomycetes</taxon>
        <taxon>Eurotiomycetidae</taxon>
        <taxon>Eurotiales</taxon>
        <taxon>Aspergillaceae</taxon>
        <taxon>Aspergillus</taxon>
        <taxon>Aspergillus subgen. Fumigati</taxon>
    </lineage>
</organism>
<accession>B0XYJ1</accession>
<name>SLTA_ASPFC</name>
<reference key="1">
    <citation type="journal article" date="2008" name="PLoS Genet.">
        <title>Genomic islands in the pathogenic filamentous fungus Aspergillus fumigatus.</title>
        <authorList>
            <person name="Fedorova N.D."/>
            <person name="Khaldi N."/>
            <person name="Joardar V.S."/>
            <person name="Maiti R."/>
            <person name="Amedeo P."/>
            <person name="Anderson M.J."/>
            <person name="Crabtree J."/>
            <person name="Silva J.C."/>
            <person name="Badger J.H."/>
            <person name="Albarraq A."/>
            <person name="Angiuoli S."/>
            <person name="Bussey H."/>
            <person name="Bowyer P."/>
            <person name="Cotty P.J."/>
            <person name="Dyer P.S."/>
            <person name="Egan A."/>
            <person name="Galens K."/>
            <person name="Fraser-Liggett C.M."/>
            <person name="Haas B.J."/>
            <person name="Inman J.M."/>
            <person name="Kent R."/>
            <person name="Lemieux S."/>
            <person name="Malavazi I."/>
            <person name="Orvis J."/>
            <person name="Roemer T."/>
            <person name="Ronning C.M."/>
            <person name="Sundaram J.P."/>
            <person name="Sutton G."/>
            <person name="Turner G."/>
            <person name="Venter J.C."/>
            <person name="White O.R."/>
            <person name="Whitty B.R."/>
            <person name="Youngman P."/>
            <person name="Wolfe K.H."/>
            <person name="Goldman G.H."/>
            <person name="Wortman J.R."/>
            <person name="Jiang B."/>
            <person name="Denning D.W."/>
            <person name="Nierman W.C."/>
        </authorList>
    </citation>
    <scope>NUCLEOTIDE SEQUENCE [LARGE SCALE GENOMIC DNA]</scope>
    <source>
        <strain>CBS 144.89 / FGSC A1163 / CEA10</strain>
    </source>
</reference>
<reference key="2">
    <citation type="journal article" date="2021" name="Antimicrob. Agents Chemother.">
        <title>The C2H2 Transcription Factor SltA Contributes to Azole Resistance by Coregulating the Expression of the Drug Target Erg11A and the Drug Efflux Pump Mdr1 in Aspergillus fumigatus.</title>
        <authorList>
            <person name="Du W."/>
            <person name="Zhai P."/>
            <person name="Wang T."/>
            <person name="Bromley M.J."/>
            <person name="Zhang Y."/>
            <person name="Lu L."/>
        </authorList>
    </citation>
    <scope>FUNCTION</scope>
    <scope>DISRUPTION PHENOTYPE</scope>
    <scope>INDUCTION</scope>
    <scope>MUTAGENESIS OF CYS-502 AND HIS-518</scope>
    <scope>DOMAIN</scope>
    <scope>DNA-BINDING</scope>
</reference>
<proteinExistence type="evidence at protein level"/>
<protein>
    <recommendedName>
        <fullName evidence="4">C2H2 zinc finger transcription factor sltA</fullName>
    </recommendedName>
    <alternativeName>
        <fullName evidence="4">Salt tolerance pathway protein A</fullName>
    </alternativeName>
</protein>
<gene>
    <name evidence="4" type="primary">sltA</name>
    <name type="ORF">AFUB_041100</name>
</gene>
<dbReference type="EMBL" id="DS499596">
    <property type="protein sequence ID" value="EDP52937.1"/>
    <property type="molecule type" value="Genomic_DNA"/>
</dbReference>
<dbReference type="SMR" id="B0XYJ1"/>
<dbReference type="EnsemblFungi" id="EDP52937">
    <property type="protein sequence ID" value="EDP52937"/>
    <property type="gene ID" value="AFUB_041100"/>
</dbReference>
<dbReference type="VEuPathDB" id="FungiDB:AFUB_041100"/>
<dbReference type="HOGENOM" id="CLU_008243_0_0_1"/>
<dbReference type="OrthoDB" id="77051at5052"/>
<dbReference type="PhylomeDB" id="B0XYJ1"/>
<dbReference type="PHI-base" id="PHI:123471"/>
<dbReference type="Proteomes" id="UP000001699">
    <property type="component" value="Unassembled WGS sequence"/>
</dbReference>
<dbReference type="GO" id="GO:0005634">
    <property type="term" value="C:nucleus"/>
    <property type="evidence" value="ECO:0007669"/>
    <property type="project" value="UniProtKB-SubCell"/>
</dbReference>
<dbReference type="GO" id="GO:0008270">
    <property type="term" value="F:zinc ion binding"/>
    <property type="evidence" value="ECO:0007669"/>
    <property type="project" value="UniProtKB-KW"/>
</dbReference>
<dbReference type="InterPro" id="IPR013087">
    <property type="entry name" value="Znf_C2H2_type"/>
</dbReference>
<dbReference type="SMART" id="SM00355">
    <property type="entry name" value="ZnF_C2H2"/>
    <property type="match status" value="3"/>
</dbReference>
<dbReference type="PROSITE" id="PS00028">
    <property type="entry name" value="ZINC_FINGER_C2H2_1"/>
    <property type="match status" value="1"/>
</dbReference>
<dbReference type="PROSITE" id="PS50157">
    <property type="entry name" value="ZINC_FINGER_C2H2_2"/>
    <property type="match status" value="1"/>
</dbReference>
<comment type="function">
    <text evidence="3">Transcription factor that contributes to azole resistance by coregulating the expression of the drug target erg11A and the drug efflux pump mdr1 (PubMed:33431412). Binds to the 5'-AGGCA-3' motif in the promoters of ergosterol biosynthesis and drug pump genes to regulate their expression (PubMed:33431412). Is able to interact with the promoters of sltA, sltB, erg11A, erg13A, erg24A, mdr1, abcE and mfsC (PubMed:33431412). Involved in antifungal drug resistance to azoles, terbinafine, and simvastatin but not amphotericin B or caspofungin (PubMed:33431412).</text>
</comment>
<comment type="subcellular location">
    <subcellularLocation>
        <location evidence="5">Nucleus</location>
    </subcellularLocation>
</comment>
<comment type="induction">
    <text evidence="3">Expression is increased by itraconazole treatment.</text>
</comment>
<comment type="domain">
    <text evidence="3">The C2H2 DNA-binding domain and the C terminus (residues 596 to 888) are essential for the functions in itraconazole resistance.</text>
</comment>
<comment type="disruption phenotype">
    <text evidence="3">Leads to multidrug sensitivity to azoles such as itraconazole, but also to terbinafine and simvastatin.</text>
</comment>
<feature type="chain" id="PRO_0000460147" description="C2H2 zinc finger transcription factor sltA">
    <location>
        <begin position="1"/>
        <end position="888"/>
    </location>
</feature>
<feature type="zinc finger region" description="C2H2-type 1" evidence="1">
    <location>
        <begin position="500"/>
        <end position="522"/>
    </location>
</feature>
<feature type="zinc finger region" description="C2H2-type 2" evidence="1">
    <location>
        <begin position="561"/>
        <end position="586"/>
    </location>
</feature>
<feature type="region of interest" description="Disordered" evidence="2">
    <location>
        <begin position="1"/>
        <end position="78"/>
    </location>
</feature>
<feature type="region of interest" description="Disordered" evidence="2">
    <location>
        <begin position="132"/>
        <end position="176"/>
    </location>
</feature>
<feature type="region of interest" description="Disordered" evidence="2">
    <location>
        <begin position="388"/>
        <end position="407"/>
    </location>
</feature>
<feature type="region of interest" description="Disordered" evidence="2">
    <location>
        <begin position="589"/>
        <end position="663"/>
    </location>
</feature>
<feature type="compositionally biased region" description="Polar residues" evidence="2">
    <location>
        <begin position="23"/>
        <end position="32"/>
    </location>
</feature>
<feature type="compositionally biased region" description="Polar residues" evidence="2">
    <location>
        <begin position="167"/>
        <end position="176"/>
    </location>
</feature>
<feature type="compositionally biased region" description="Polar residues" evidence="2">
    <location>
        <begin position="388"/>
        <end position="397"/>
    </location>
</feature>
<feature type="compositionally biased region" description="Polar residues" evidence="2">
    <location>
        <begin position="602"/>
        <end position="632"/>
    </location>
</feature>
<feature type="mutagenesis site" description="Impairs DNA-binding and leads to itraconazole hypersusceptibility." evidence="3">
    <original>C</original>
    <variation>S</variation>
    <location>
        <position position="502"/>
    </location>
</feature>
<feature type="mutagenesis site" description="Impairs DNA-binding and leads to itraconazole hypersusceptibility." evidence="3">
    <original>H</original>
    <variation>A</variation>
    <location>
        <position position="518"/>
    </location>
</feature>
<evidence type="ECO:0000255" key="1">
    <source>
        <dbReference type="PROSITE-ProRule" id="PRU00042"/>
    </source>
</evidence>
<evidence type="ECO:0000256" key="2">
    <source>
        <dbReference type="SAM" id="MobiDB-lite"/>
    </source>
</evidence>
<evidence type="ECO:0000269" key="3">
    <source>
    </source>
</evidence>
<evidence type="ECO:0000303" key="4">
    <source>
    </source>
</evidence>
<evidence type="ECO:0000305" key="5"/>